<reference key="1">
    <citation type="journal article" date="1998" name="Science">
        <title>Genome sequence of the nematode C. elegans: a platform for investigating biology.</title>
        <authorList>
            <consortium name="The C. elegans sequencing consortium"/>
        </authorList>
    </citation>
    <scope>NUCLEOTIDE SEQUENCE [LARGE SCALE GENOMIC DNA]</scope>
    <source>
        <strain>Bristol N2</strain>
    </source>
</reference>
<sequence length="115" mass="12520">MGVEISLDPPVCPIQANGGVSKHKMINHTDRHMAYKVKSSNNSNYSVNLIYGILKVCDVKELVITRKPGKPQADKLIIQYCMVVDENTDPKPLFANGVPPGELSGETVIKLSAAE</sequence>
<organism>
    <name type="scientific">Caenorhabditis elegans</name>
    <dbReference type="NCBI Taxonomy" id="6239"/>
    <lineage>
        <taxon>Eukaryota</taxon>
        <taxon>Metazoa</taxon>
        <taxon>Ecdysozoa</taxon>
        <taxon>Nematoda</taxon>
        <taxon>Chromadorea</taxon>
        <taxon>Rhabditida</taxon>
        <taxon>Rhabditina</taxon>
        <taxon>Rhabditomorpha</taxon>
        <taxon>Rhabditoidea</taxon>
        <taxon>Rhabditidae</taxon>
        <taxon>Peloderinae</taxon>
        <taxon>Caenorhabditis</taxon>
    </lineage>
</organism>
<protein>
    <recommendedName>
        <fullName>Uncharacterized protein ZK1307.4</fullName>
    </recommendedName>
</protein>
<proteinExistence type="predicted"/>
<name>YS14_CAEEL</name>
<accession>Q09362</accession>
<gene>
    <name type="ORF">ZK1307.4</name>
</gene>
<keyword id="KW-1185">Reference proteome</keyword>
<feature type="chain" id="PRO_0000213481" description="Uncharacterized protein ZK1307.4">
    <location>
        <begin position="1"/>
        <end position="115"/>
    </location>
</feature>
<feature type="domain" description="MSP" evidence="1">
    <location>
        <begin position="1"/>
        <end position="115"/>
    </location>
</feature>
<evidence type="ECO:0000255" key="1">
    <source>
        <dbReference type="PROSITE-ProRule" id="PRU00132"/>
    </source>
</evidence>
<dbReference type="EMBL" id="Z47358">
    <property type="protein sequence ID" value="CAA87432.2"/>
    <property type="molecule type" value="Genomic_DNA"/>
</dbReference>
<dbReference type="PIR" id="T27729">
    <property type="entry name" value="T27729"/>
</dbReference>
<dbReference type="RefSeq" id="NP_496078.1">
    <property type="nucleotide sequence ID" value="NM_063677.2"/>
</dbReference>
<dbReference type="SMR" id="Q09362"/>
<dbReference type="FunCoup" id="Q09362">
    <property type="interactions" value="348"/>
</dbReference>
<dbReference type="STRING" id="6239.ZK1307.4.1"/>
<dbReference type="PaxDb" id="6239-ZK1307.4"/>
<dbReference type="EnsemblMetazoa" id="ZK1307.4.1">
    <property type="protein sequence ID" value="ZK1307.4.1"/>
    <property type="gene ID" value="WBGene00014247"/>
</dbReference>
<dbReference type="GeneID" id="191561"/>
<dbReference type="KEGG" id="cel:CELE_ZK1307.4"/>
<dbReference type="UCSC" id="ZK1307.4">
    <property type="organism name" value="c. elegans"/>
</dbReference>
<dbReference type="AGR" id="WB:WBGene00014247"/>
<dbReference type="CTD" id="191561"/>
<dbReference type="WormBase" id="ZK1307.4">
    <property type="protein sequence ID" value="CE25681"/>
    <property type="gene ID" value="WBGene00014247"/>
</dbReference>
<dbReference type="eggNOG" id="ENOG502SV84">
    <property type="taxonomic scope" value="Eukaryota"/>
</dbReference>
<dbReference type="GeneTree" id="ENSGT00970000195921"/>
<dbReference type="HOGENOM" id="CLU_147608_1_0_1"/>
<dbReference type="InParanoid" id="Q09362"/>
<dbReference type="OMA" id="HKMINHT"/>
<dbReference type="OrthoDB" id="5793629at2759"/>
<dbReference type="PhylomeDB" id="Q09362"/>
<dbReference type="PRO" id="PR:Q09362"/>
<dbReference type="Proteomes" id="UP000001940">
    <property type="component" value="Chromosome II"/>
</dbReference>
<dbReference type="Bgee" id="WBGene00014247">
    <property type="expression patterns" value="Expressed in adult organism and 1 other cell type or tissue"/>
</dbReference>
<dbReference type="Gene3D" id="2.60.40.10">
    <property type="entry name" value="Immunoglobulins"/>
    <property type="match status" value="1"/>
</dbReference>
<dbReference type="InterPro" id="IPR013783">
    <property type="entry name" value="Ig-like_fold"/>
</dbReference>
<dbReference type="InterPro" id="IPR000535">
    <property type="entry name" value="MSP_dom"/>
</dbReference>
<dbReference type="InterPro" id="IPR008962">
    <property type="entry name" value="PapD-like_sf"/>
</dbReference>
<dbReference type="InterPro" id="IPR051774">
    <property type="entry name" value="Sperm-specific_class_P"/>
</dbReference>
<dbReference type="PANTHER" id="PTHR22947">
    <property type="entry name" value="MAJOR SPERM PROTEIN"/>
    <property type="match status" value="1"/>
</dbReference>
<dbReference type="PANTHER" id="PTHR22947:SF40">
    <property type="entry name" value="MSP DOMAIN-CONTAINING PROTEIN"/>
    <property type="match status" value="1"/>
</dbReference>
<dbReference type="Pfam" id="PF00635">
    <property type="entry name" value="Motile_Sperm"/>
    <property type="match status" value="1"/>
</dbReference>
<dbReference type="SUPFAM" id="SSF49354">
    <property type="entry name" value="PapD-like"/>
    <property type="match status" value="1"/>
</dbReference>
<dbReference type="PROSITE" id="PS50202">
    <property type="entry name" value="MSP"/>
    <property type="match status" value="1"/>
</dbReference>